<reference key="1">
    <citation type="journal article" date="2007" name="PLoS Genet.">
        <title>The complete genome sequence of Yersinia pseudotuberculosis IP31758, the causative agent of Far East scarlet-like fever.</title>
        <authorList>
            <person name="Eppinger M."/>
            <person name="Rosovitz M.J."/>
            <person name="Fricke W.F."/>
            <person name="Rasko D.A."/>
            <person name="Kokorina G."/>
            <person name="Fayolle C."/>
            <person name="Lindler L.E."/>
            <person name="Carniel E."/>
            <person name="Ravel J."/>
        </authorList>
    </citation>
    <scope>NUCLEOTIDE SEQUENCE [LARGE SCALE GENOMIC DNA]</scope>
    <source>
        <strain>IP 31758</strain>
    </source>
</reference>
<evidence type="ECO:0000255" key="1">
    <source>
        <dbReference type="HAMAP-Rule" id="MF_00413"/>
    </source>
</evidence>
<organism>
    <name type="scientific">Yersinia pseudotuberculosis serotype O:1b (strain IP 31758)</name>
    <dbReference type="NCBI Taxonomy" id="349747"/>
    <lineage>
        <taxon>Bacteria</taxon>
        <taxon>Pseudomonadati</taxon>
        <taxon>Pseudomonadota</taxon>
        <taxon>Gammaproteobacteria</taxon>
        <taxon>Enterobacterales</taxon>
        <taxon>Yersiniaceae</taxon>
        <taxon>Yersinia</taxon>
    </lineage>
</organism>
<accession>A7FDA1</accession>
<comment type="function">
    <text evidence="1">Sulfur carrier protein involved in sulfur trafficking in the cell. Part of a sulfur-relay system required for 2-thiolation during synthesis of 2-thiouridine of the modified wobble base 5-methylaminomethyl-2-thiouridine (mnm(5)s(2)U) in tRNA. Interacts with IscS and stimulates its cysteine desulfurase activity. Accepts an activated sulfur from IscS, which is then transferred to TusD, and thus determines the direction of sulfur flow from IscS to 2-thiouridine formation. Also appears to be involved in sulfur transfer for the biosynthesis of molybdopterin.</text>
</comment>
<comment type="pathway">
    <text evidence="1">tRNA modification.</text>
</comment>
<comment type="subunit">
    <text evidence="1">Interacts with IscS.</text>
</comment>
<comment type="subcellular location">
    <subcellularLocation>
        <location evidence="1">Cytoplasm</location>
    </subcellularLocation>
</comment>
<comment type="similarity">
    <text evidence="1">Belongs to the sulfur carrier protein TusA family.</text>
</comment>
<protein>
    <recommendedName>
        <fullName evidence="1">Sulfur carrier protein TusA</fullName>
    </recommendedName>
    <alternativeName>
        <fullName evidence="1">Sulfur mediator TusA</fullName>
    </alternativeName>
    <alternativeName>
        <fullName evidence="1">Sulfur transfer protein TusA</fullName>
    </alternativeName>
    <alternativeName>
        <fullName evidence="1">tRNA 2-thiouridine synthesizing protein A</fullName>
    </alternativeName>
</protein>
<keyword id="KW-0963">Cytoplasm</keyword>
<keyword id="KW-0819">tRNA processing</keyword>
<name>TUSA_YERP3</name>
<gene>
    <name evidence="1" type="primary">tusA</name>
    <name type="ordered locus">YpsIP31758_0232</name>
</gene>
<sequence length="84" mass="9536">MTDIFANPDKTLDALGLRCPEPVMMVRKTVRHMEEGQTLLIIADDPATTRDIPGFCRFMDHQLLAQDTEQTPYRYLVRKGITAG</sequence>
<proteinExistence type="inferred from homology"/>
<feature type="chain" id="PRO_1000060063" description="Sulfur carrier protein TusA">
    <location>
        <begin position="1"/>
        <end position="84"/>
    </location>
</feature>
<feature type="active site" description="Cysteine persulfide intermediate" evidence="1">
    <location>
        <position position="19"/>
    </location>
</feature>
<dbReference type="EMBL" id="CP000720">
    <property type="protein sequence ID" value="ABS46040.1"/>
    <property type="molecule type" value="Genomic_DNA"/>
</dbReference>
<dbReference type="RefSeq" id="WP_002215973.1">
    <property type="nucleotide sequence ID" value="NC_009708.1"/>
</dbReference>
<dbReference type="SMR" id="A7FDA1"/>
<dbReference type="GeneID" id="57974887"/>
<dbReference type="KEGG" id="ypi:YpsIP31758_0232"/>
<dbReference type="HOGENOM" id="CLU_165255_5_0_6"/>
<dbReference type="Proteomes" id="UP000002412">
    <property type="component" value="Chromosome"/>
</dbReference>
<dbReference type="GO" id="GO:0005737">
    <property type="term" value="C:cytoplasm"/>
    <property type="evidence" value="ECO:0007669"/>
    <property type="project" value="UniProtKB-SubCell"/>
</dbReference>
<dbReference type="GO" id="GO:0097163">
    <property type="term" value="F:sulfur carrier activity"/>
    <property type="evidence" value="ECO:0007669"/>
    <property type="project" value="UniProtKB-UniRule"/>
</dbReference>
<dbReference type="GO" id="GO:0002143">
    <property type="term" value="P:tRNA wobble position uridine thiolation"/>
    <property type="evidence" value="ECO:0007669"/>
    <property type="project" value="InterPro"/>
</dbReference>
<dbReference type="CDD" id="cd03423">
    <property type="entry name" value="SirA"/>
    <property type="match status" value="1"/>
</dbReference>
<dbReference type="Gene3D" id="3.30.110.40">
    <property type="entry name" value="TusA-like domain"/>
    <property type="match status" value="1"/>
</dbReference>
<dbReference type="HAMAP" id="MF_00413">
    <property type="entry name" value="Thiourid_synth_A"/>
    <property type="match status" value="1"/>
</dbReference>
<dbReference type="InterPro" id="IPR022931">
    <property type="entry name" value="Sulphur_carrier_TusA"/>
</dbReference>
<dbReference type="InterPro" id="IPR001455">
    <property type="entry name" value="TusA-like"/>
</dbReference>
<dbReference type="InterPro" id="IPR036868">
    <property type="entry name" value="TusA-like_sf"/>
</dbReference>
<dbReference type="NCBIfam" id="NF001423">
    <property type="entry name" value="PRK00299.1"/>
    <property type="match status" value="1"/>
</dbReference>
<dbReference type="PANTHER" id="PTHR33279:SF2">
    <property type="entry name" value="SULFUR CARRIER PROTEIN TUSA"/>
    <property type="match status" value="1"/>
</dbReference>
<dbReference type="PANTHER" id="PTHR33279">
    <property type="entry name" value="SULFUR CARRIER PROTEIN YEDF-RELATED"/>
    <property type="match status" value="1"/>
</dbReference>
<dbReference type="Pfam" id="PF01206">
    <property type="entry name" value="TusA"/>
    <property type="match status" value="1"/>
</dbReference>
<dbReference type="SUPFAM" id="SSF64307">
    <property type="entry name" value="SirA-like"/>
    <property type="match status" value="1"/>
</dbReference>
<dbReference type="PROSITE" id="PS01148">
    <property type="entry name" value="UPF0033"/>
    <property type="match status" value="1"/>
</dbReference>